<protein>
    <recommendedName>
        <fullName evidence="1">Ribosomal RNA small subunit methyltransferase G</fullName>
        <ecNumber evidence="1">2.1.1.-</ecNumber>
    </recommendedName>
    <alternativeName>
        <fullName evidence="1">16S rRNA 7-methylguanosine methyltransferase</fullName>
        <shortName evidence="1">16S rRNA m7G methyltransferase</shortName>
    </alternativeName>
</protein>
<proteinExistence type="inferred from homology"/>
<dbReference type="EC" id="2.1.1.-" evidence="1"/>
<dbReference type="EMBL" id="AP006840">
    <property type="protein sequence ID" value="BAD42315.1"/>
    <property type="molecule type" value="Genomic_DNA"/>
</dbReference>
<dbReference type="RefSeq" id="WP_011197445.1">
    <property type="nucleotide sequence ID" value="NC_006177.1"/>
</dbReference>
<dbReference type="SMR" id="Q67J35"/>
<dbReference type="STRING" id="292459.STH3334"/>
<dbReference type="KEGG" id="sth:STH3334"/>
<dbReference type="eggNOG" id="COG0357">
    <property type="taxonomic scope" value="Bacteria"/>
</dbReference>
<dbReference type="HOGENOM" id="CLU_065341_0_0_9"/>
<dbReference type="OrthoDB" id="9808773at2"/>
<dbReference type="Proteomes" id="UP000000417">
    <property type="component" value="Chromosome"/>
</dbReference>
<dbReference type="GO" id="GO:0005829">
    <property type="term" value="C:cytosol"/>
    <property type="evidence" value="ECO:0007669"/>
    <property type="project" value="TreeGrafter"/>
</dbReference>
<dbReference type="GO" id="GO:0070043">
    <property type="term" value="F:rRNA (guanine-N7-)-methyltransferase activity"/>
    <property type="evidence" value="ECO:0007669"/>
    <property type="project" value="UniProtKB-UniRule"/>
</dbReference>
<dbReference type="FunFam" id="3.40.50.150:FF:000041">
    <property type="entry name" value="Ribosomal RNA small subunit methyltransferase G"/>
    <property type="match status" value="1"/>
</dbReference>
<dbReference type="Gene3D" id="3.40.50.150">
    <property type="entry name" value="Vaccinia Virus protein VP39"/>
    <property type="match status" value="1"/>
</dbReference>
<dbReference type="HAMAP" id="MF_00074">
    <property type="entry name" value="16SrRNA_methyltr_G"/>
    <property type="match status" value="1"/>
</dbReference>
<dbReference type="InterPro" id="IPR003682">
    <property type="entry name" value="rRNA_ssu_MeTfrase_G"/>
</dbReference>
<dbReference type="InterPro" id="IPR029063">
    <property type="entry name" value="SAM-dependent_MTases_sf"/>
</dbReference>
<dbReference type="NCBIfam" id="TIGR00138">
    <property type="entry name" value="rsmG_gidB"/>
    <property type="match status" value="1"/>
</dbReference>
<dbReference type="PANTHER" id="PTHR31760">
    <property type="entry name" value="S-ADENOSYL-L-METHIONINE-DEPENDENT METHYLTRANSFERASES SUPERFAMILY PROTEIN"/>
    <property type="match status" value="1"/>
</dbReference>
<dbReference type="PANTHER" id="PTHR31760:SF0">
    <property type="entry name" value="S-ADENOSYL-L-METHIONINE-DEPENDENT METHYLTRANSFERASES SUPERFAMILY PROTEIN"/>
    <property type="match status" value="1"/>
</dbReference>
<dbReference type="Pfam" id="PF02527">
    <property type="entry name" value="GidB"/>
    <property type="match status" value="1"/>
</dbReference>
<dbReference type="PIRSF" id="PIRSF003078">
    <property type="entry name" value="GidB"/>
    <property type="match status" value="1"/>
</dbReference>
<dbReference type="SUPFAM" id="SSF53335">
    <property type="entry name" value="S-adenosyl-L-methionine-dependent methyltransferases"/>
    <property type="match status" value="1"/>
</dbReference>
<keyword id="KW-0963">Cytoplasm</keyword>
<keyword id="KW-0489">Methyltransferase</keyword>
<keyword id="KW-1185">Reference proteome</keyword>
<keyword id="KW-0698">rRNA processing</keyword>
<keyword id="KW-0949">S-adenosyl-L-methionine</keyword>
<keyword id="KW-0808">Transferase</keyword>
<accession>Q67J35</accession>
<organism>
    <name type="scientific">Symbiobacterium thermophilum (strain DSM 24528 / JCM 14929 / IAM 14863 / T)</name>
    <dbReference type="NCBI Taxonomy" id="292459"/>
    <lineage>
        <taxon>Bacteria</taxon>
        <taxon>Bacillati</taxon>
        <taxon>Bacillota</taxon>
        <taxon>Clostridia</taxon>
        <taxon>Eubacteriales</taxon>
        <taxon>Symbiobacteriaceae</taxon>
        <taxon>Symbiobacterium</taxon>
    </lineage>
</organism>
<name>RSMG_SYMTH</name>
<reference key="1">
    <citation type="journal article" date="2004" name="Nucleic Acids Res.">
        <title>Genome sequence of Symbiobacterium thermophilum, an uncultivable bacterium that depends on microbial commensalism.</title>
        <authorList>
            <person name="Ueda K."/>
            <person name="Yamashita A."/>
            <person name="Ishikawa J."/>
            <person name="Shimada M."/>
            <person name="Watsuji T."/>
            <person name="Morimura K."/>
            <person name="Ikeda H."/>
            <person name="Hattori M."/>
            <person name="Beppu T."/>
        </authorList>
    </citation>
    <scope>NUCLEOTIDE SEQUENCE [LARGE SCALE GENOMIC DNA]</scope>
    <source>
        <strain>DSM 24528 / JCM 14929 / IAM 14863 / T</strain>
    </source>
</reference>
<comment type="function">
    <text evidence="1">Specifically methylates the N7 position of a guanine in 16S rRNA.</text>
</comment>
<comment type="subcellular location">
    <subcellularLocation>
        <location evidence="1">Cytoplasm</location>
    </subcellularLocation>
</comment>
<comment type="similarity">
    <text evidence="1">Belongs to the methyltransferase superfamily. RNA methyltransferase RsmG family.</text>
</comment>
<gene>
    <name evidence="1" type="primary">rsmG</name>
    <name type="ordered locus">STH3334</name>
</gene>
<evidence type="ECO:0000255" key="1">
    <source>
        <dbReference type="HAMAP-Rule" id="MF_00074"/>
    </source>
</evidence>
<evidence type="ECO:0000256" key="2">
    <source>
        <dbReference type="SAM" id="MobiDB-lite"/>
    </source>
</evidence>
<sequence length="246" mass="26424">MDATAYRGLLEEGLASLGVEAEPGGVEAVLLHLDLVREWNERMNLTAITDPQEMVIKHALDAASGLAVAGVEPGQRVIDVGTGAGFPGVVWKCLRPGIDLTLLESLQKRCRFLEEVGQAVIGPLAGGEGYQVVWGRAEDVGRNPAHRERYDLVTARAVAELRVLAEYCLPLARVGGRFLAMKGPSVGEEILAAEAAVEKLGGRLEEVRELELPDGGGRRSLVLIRKERPTPKAYPRRAGVPAKSPL</sequence>
<feature type="chain" id="PRO_0000184350" description="Ribosomal RNA small subunit methyltransferase G">
    <location>
        <begin position="1"/>
        <end position="246"/>
    </location>
</feature>
<feature type="region of interest" description="Disordered" evidence="2">
    <location>
        <begin position="221"/>
        <end position="246"/>
    </location>
</feature>
<feature type="binding site" evidence="1">
    <location>
        <position position="81"/>
    </location>
    <ligand>
        <name>S-adenosyl-L-methionine</name>
        <dbReference type="ChEBI" id="CHEBI:59789"/>
    </ligand>
</feature>
<feature type="binding site" evidence="1">
    <location>
        <position position="86"/>
    </location>
    <ligand>
        <name>S-adenosyl-L-methionine</name>
        <dbReference type="ChEBI" id="CHEBI:59789"/>
    </ligand>
</feature>
<feature type="binding site" evidence="1">
    <location>
        <begin position="137"/>
        <end position="138"/>
    </location>
    <ligand>
        <name>S-adenosyl-L-methionine</name>
        <dbReference type="ChEBI" id="CHEBI:59789"/>
    </ligand>
</feature>
<feature type="binding site" evidence="1">
    <location>
        <position position="156"/>
    </location>
    <ligand>
        <name>S-adenosyl-L-methionine</name>
        <dbReference type="ChEBI" id="CHEBI:59789"/>
    </ligand>
</feature>